<organism>
    <name type="scientific">Neorickettsia sennetsu (strain ATCC VR-367 / Miyayama)</name>
    <name type="common">Ehrlichia sennetsu</name>
    <dbReference type="NCBI Taxonomy" id="222891"/>
    <lineage>
        <taxon>Bacteria</taxon>
        <taxon>Pseudomonadati</taxon>
        <taxon>Pseudomonadota</taxon>
        <taxon>Alphaproteobacteria</taxon>
        <taxon>Rickettsiales</taxon>
        <taxon>Anaplasmataceae</taxon>
        <taxon>Neorickettsia</taxon>
    </lineage>
</organism>
<accession>Q2GE40</accession>
<evidence type="ECO:0000255" key="1">
    <source>
        <dbReference type="HAMAP-Rule" id="MF_01570"/>
    </source>
</evidence>
<protein>
    <recommendedName>
        <fullName evidence="1">Proline--tRNA ligase</fullName>
        <ecNumber evidence="1">6.1.1.15</ecNumber>
    </recommendedName>
    <alternativeName>
        <fullName evidence="1">Prolyl-tRNA synthetase</fullName>
        <shortName evidence="1">ProRS</shortName>
    </alternativeName>
</protein>
<comment type="function">
    <text evidence="1">Catalyzes the attachment of proline to tRNA(Pro) in a two-step reaction: proline is first activated by ATP to form Pro-AMP and then transferred to the acceptor end of tRNA(Pro).</text>
</comment>
<comment type="catalytic activity">
    <reaction evidence="1">
        <text>tRNA(Pro) + L-proline + ATP = L-prolyl-tRNA(Pro) + AMP + diphosphate</text>
        <dbReference type="Rhea" id="RHEA:14305"/>
        <dbReference type="Rhea" id="RHEA-COMP:9700"/>
        <dbReference type="Rhea" id="RHEA-COMP:9702"/>
        <dbReference type="ChEBI" id="CHEBI:30616"/>
        <dbReference type="ChEBI" id="CHEBI:33019"/>
        <dbReference type="ChEBI" id="CHEBI:60039"/>
        <dbReference type="ChEBI" id="CHEBI:78442"/>
        <dbReference type="ChEBI" id="CHEBI:78532"/>
        <dbReference type="ChEBI" id="CHEBI:456215"/>
        <dbReference type="EC" id="6.1.1.15"/>
    </reaction>
</comment>
<comment type="subunit">
    <text evidence="1">Homodimer.</text>
</comment>
<comment type="subcellular location">
    <subcellularLocation>
        <location evidence="1">Cytoplasm</location>
    </subcellularLocation>
</comment>
<comment type="similarity">
    <text evidence="1">Belongs to the class-II aminoacyl-tRNA synthetase family. ProS type 2 subfamily.</text>
</comment>
<feature type="chain" id="PRO_0000248903" description="Proline--tRNA ligase">
    <location>
        <begin position="1"/>
        <end position="436"/>
    </location>
</feature>
<sequence>MKNKTRVSEYYLPLMKNVSGEVKLRSHKYSLRAGLVKQCGAGLYSWLPLGLKVLRNIESVIRQELDSMGMHEMLMPCIQLAKLWEESGRYSDYGKELLKFKDRHDNELLFGPTNEEVITAIVRDDLASYKQLPKILYHIQWKFRDEIRPRFGLMRAREFLMKDAYSFDVDQQSARISYNKVYQSYLRIFKRLGLNPIPCRANAGVIGGSLNHEFHITTTEGGEGKIFYPEEMGELVDEFCKIDPSNEHAVSVMTEKLQELFCFTEECNSSGIGNDNRICTAQGIEVGHIFLFGEKYSAPMQARFSGRDGKKKNFYMGSYGIGISRLLAAIIEVHSDDKGIIWPESIAPFKIGLINLHGESCGFAEEIFSKLDSVIYDDTADSQGVKFARMDLIGVPFQIIVGKNGPIHGTIELKYRLDSKRESRSLNELVSLFSHT</sequence>
<reference key="1">
    <citation type="journal article" date="2006" name="PLoS Genet.">
        <title>Comparative genomics of emerging human ehrlichiosis agents.</title>
        <authorList>
            <person name="Dunning Hotopp J.C."/>
            <person name="Lin M."/>
            <person name="Madupu R."/>
            <person name="Crabtree J."/>
            <person name="Angiuoli S.V."/>
            <person name="Eisen J.A."/>
            <person name="Seshadri R."/>
            <person name="Ren Q."/>
            <person name="Wu M."/>
            <person name="Utterback T.R."/>
            <person name="Smith S."/>
            <person name="Lewis M."/>
            <person name="Khouri H."/>
            <person name="Zhang C."/>
            <person name="Niu H."/>
            <person name="Lin Q."/>
            <person name="Ohashi N."/>
            <person name="Zhi N."/>
            <person name="Nelson W.C."/>
            <person name="Brinkac L.M."/>
            <person name="Dodson R.J."/>
            <person name="Rosovitz M.J."/>
            <person name="Sundaram J.P."/>
            <person name="Daugherty S.C."/>
            <person name="Davidsen T."/>
            <person name="Durkin A.S."/>
            <person name="Gwinn M.L."/>
            <person name="Haft D.H."/>
            <person name="Selengut J.D."/>
            <person name="Sullivan S.A."/>
            <person name="Zafar N."/>
            <person name="Zhou L."/>
            <person name="Benahmed F."/>
            <person name="Forberger H."/>
            <person name="Halpin R."/>
            <person name="Mulligan S."/>
            <person name="Robinson J."/>
            <person name="White O."/>
            <person name="Rikihisa Y."/>
            <person name="Tettelin H."/>
        </authorList>
    </citation>
    <scope>NUCLEOTIDE SEQUENCE [LARGE SCALE GENOMIC DNA]</scope>
    <source>
        <strain>ATCC VR-367 / Miyayama</strain>
    </source>
</reference>
<proteinExistence type="inferred from homology"/>
<keyword id="KW-0030">Aminoacyl-tRNA synthetase</keyword>
<keyword id="KW-0067">ATP-binding</keyword>
<keyword id="KW-0963">Cytoplasm</keyword>
<keyword id="KW-0436">Ligase</keyword>
<keyword id="KW-0547">Nucleotide-binding</keyword>
<keyword id="KW-0648">Protein biosynthesis</keyword>
<gene>
    <name evidence="1" type="primary">proS</name>
    <name type="ordered locus">NSE_0367</name>
</gene>
<dbReference type="EC" id="6.1.1.15" evidence="1"/>
<dbReference type="EMBL" id="CP000237">
    <property type="protein sequence ID" value="ABD46398.1"/>
    <property type="molecule type" value="Genomic_DNA"/>
</dbReference>
<dbReference type="RefSeq" id="WP_011451762.1">
    <property type="nucleotide sequence ID" value="NC_007798.1"/>
</dbReference>
<dbReference type="SMR" id="Q2GE40"/>
<dbReference type="STRING" id="222891.NSE_0367"/>
<dbReference type="KEGG" id="nse:NSE_0367"/>
<dbReference type="eggNOG" id="COG0442">
    <property type="taxonomic scope" value="Bacteria"/>
</dbReference>
<dbReference type="HOGENOM" id="CLU_016739_4_2_5"/>
<dbReference type="OrthoDB" id="9809052at2"/>
<dbReference type="Proteomes" id="UP000001942">
    <property type="component" value="Chromosome"/>
</dbReference>
<dbReference type="GO" id="GO:0005829">
    <property type="term" value="C:cytosol"/>
    <property type="evidence" value="ECO:0007669"/>
    <property type="project" value="TreeGrafter"/>
</dbReference>
<dbReference type="GO" id="GO:0005524">
    <property type="term" value="F:ATP binding"/>
    <property type="evidence" value="ECO:0007669"/>
    <property type="project" value="UniProtKB-UniRule"/>
</dbReference>
<dbReference type="GO" id="GO:0004827">
    <property type="term" value="F:proline-tRNA ligase activity"/>
    <property type="evidence" value="ECO:0007669"/>
    <property type="project" value="UniProtKB-UniRule"/>
</dbReference>
<dbReference type="GO" id="GO:0006433">
    <property type="term" value="P:prolyl-tRNA aminoacylation"/>
    <property type="evidence" value="ECO:0007669"/>
    <property type="project" value="UniProtKB-UniRule"/>
</dbReference>
<dbReference type="CDD" id="cd00779">
    <property type="entry name" value="ProRS_core_prok"/>
    <property type="match status" value="1"/>
</dbReference>
<dbReference type="Gene3D" id="3.40.50.800">
    <property type="entry name" value="Anticodon-binding domain"/>
    <property type="match status" value="1"/>
</dbReference>
<dbReference type="Gene3D" id="3.30.930.10">
    <property type="entry name" value="Bira Bifunctional Protein, Domain 2"/>
    <property type="match status" value="1"/>
</dbReference>
<dbReference type="HAMAP" id="MF_01570">
    <property type="entry name" value="Pro_tRNA_synth_type2"/>
    <property type="match status" value="1"/>
</dbReference>
<dbReference type="InterPro" id="IPR002314">
    <property type="entry name" value="aa-tRNA-synt_IIb"/>
</dbReference>
<dbReference type="InterPro" id="IPR006195">
    <property type="entry name" value="aa-tRNA-synth_II"/>
</dbReference>
<dbReference type="InterPro" id="IPR045864">
    <property type="entry name" value="aa-tRNA-synth_II/BPL/LPL"/>
</dbReference>
<dbReference type="InterPro" id="IPR004154">
    <property type="entry name" value="Anticodon-bd"/>
</dbReference>
<dbReference type="InterPro" id="IPR036621">
    <property type="entry name" value="Anticodon-bd_dom_sf"/>
</dbReference>
<dbReference type="InterPro" id="IPR002316">
    <property type="entry name" value="Pro-tRNA-ligase_IIa"/>
</dbReference>
<dbReference type="InterPro" id="IPR050062">
    <property type="entry name" value="Pro-tRNA_synthetase"/>
</dbReference>
<dbReference type="InterPro" id="IPR023716">
    <property type="entry name" value="Prolyl-tRNA_ligase_IIa_type2"/>
</dbReference>
<dbReference type="InterPro" id="IPR033730">
    <property type="entry name" value="ProRS_core_prok"/>
</dbReference>
<dbReference type="NCBIfam" id="NF008979">
    <property type="entry name" value="PRK12325.1"/>
    <property type="match status" value="1"/>
</dbReference>
<dbReference type="PANTHER" id="PTHR42753">
    <property type="entry name" value="MITOCHONDRIAL RIBOSOME PROTEIN L39/PROLYL-TRNA LIGASE FAMILY MEMBER"/>
    <property type="match status" value="1"/>
</dbReference>
<dbReference type="PANTHER" id="PTHR42753:SF2">
    <property type="entry name" value="PROLINE--TRNA LIGASE"/>
    <property type="match status" value="1"/>
</dbReference>
<dbReference type="Pfam" id="PF03129">
    <property type="entry name" value="HGTP_anticodon"/>
    <property type="match status" value="1"/>
</dbReference>
<dbReference type="Pfam" id="PF00587">
    <property type="entry name" value="tRNA-synt_2b"/>
    <property type="match status" value="1"/>
</dbReference>
<dbReference type="PRINTS" id="PR01046">
    <property type="entry name" value="TRNASYNTHPRO"/>
</dbReference>
<dbReference type="SUPFAM" id="SSF52954">
    <property type="entry name" value="Class II aaRS ABD-related"/>
    <property type="match status" value="1"/>
</dbReference>
<dbReference type="SUPFAM" id="SSF55681">
    <property type="entry name" value="Class II aaRS and biotin synthetases"/>
    <property type="match status" value="1"/>
</dbReference>
<dbReference type="PROSITE" id="PS50862">
    <property type="entry name" value="AA_TRNA_LIGASE_II"/>
    <property type="match status" value="1"/>
</dbReference>
<name>SYP_NEOSM</name>